<protein>
    <recommendedName>
        <fullName evidence="1">Small ribosomal subunit biogenesis GTPase RsgA</fullName>
        <ecNumber evidence="1">3.6.1.-</ecNumber>
    </recommendedName>
</protein>
<gene>
    <name evidence="1" type="primary">rsgA</name>
    <name type="ordered locus">SAS1155</name>
</gene>
<feature type="chain" id="PRO_0000171517" description="Small ribosomal subunit biogenesis GTPase RsgA">
    <location>
        <begin position="1"/>
        <end position="291"/>
    </location>
</feature>
<feature type="domain" description="CP-type G" evidence="2">
    <location>
        <begin position="63"/>
        <end position="221"/>
    </location>
</feature>
<feature type="binding site" evidence="1">
    <location>
        <begin position="112"/>
        <end position="115"/>
    </location>
    <ligand>
        <name>GTP</name>
        <dbReference type="ChEBI" id="CHEBI:37565"/>
    </ligand>
</feature>
<feature type="binding site" evidence="1">
    <location>
        <begin position="164"/>
        <end position="172"/>
    </location>
    <ligand>
        <name>GTP</name>
        <dbReference type="ChEBI" id="CHEBI:37565"/>
    </ligand>
</feature>
<feature type="binding site" evidence="1">
    <location>
        <position position="245"/>
    </location>
    <ligand>
        <name>Zn(2+)</name>
        <dbReference type="ChEBI" id="CHEBI:29105"/>
    </ligand>
</feature>
<feature type="binding site" evidence="1">
    <location>
        <position position="250"/>
    </location>
    <ligand>
        <name>Zn(2+)</name>
        <dbReference type="ChEBI" id="CHEBI:29105"/>
    </ligand>
</feature>
<feature type="binding site" evidence="1">
    <location>
        <position position="252"/>
    </location>
    <ligand>
        <name>Zn(2+)</name>
        <dbReference type="ChEBI" id="CHEBI:29105"/>
    </ligand>
</feature>
<feature type="binding site" evidence="1">
    <location>
        <position position="258"/>
    </location>
    <ligand>
        <name>Zn(2+)</name>
        <dbReference type="ChEBI" id="CHEBI:29105"/>
    </ligand>
</feature>
<proteinExistence type="inferred from homology"/>
<sequence length="291" mass="33875">MKTGRIVKSISGVYQVDVNGERFNTKPRGLFRKKKFSPVVGDIVEFEVQNINEGYIHQVFERKNELKRPPVSNIDTLVIVMSAVEPNFSTQLLDRFLVIAHSYQLNARVLVTKKDKTPIEKQFEINELLKIYENIGYETEFIGNDDDRKKIVEAWPAGLIVLSGQSGVGKSTFLNHYRPELNLETNDISKSLNRGKHTTRHVELFERQNGYIADTPGFSALDFDHIDKDEIKDYFLELNRYGETCKFRNCNHIKEPNCNVKHQLEIGNIAQFRYDHYLQLFNEISNRKVRY</sequence>
<dbReference type="EC" id="3.6.1.-" evidence="1"/>
<dbReference type="EMBL" id="BX571857">
    <property type="protein sequence ID" value="CAG42932.1"/>
    <property type="molecule type" value="Genomic_DNA"/>
</dbReference>
<dbReference type="RefSeq" id="WP_000847936.1">
    <property type="nucleotide sequence ID" value="NC_002953.3"/>
</dbReference>
<dbReference type="SMR" id="Q6G9Z2"/>
<dbReference type="KEGG" id="sas:SAS1155"/>
<dbReference type="HOGENOM" id="CLU_033617_2_1_9"/>
<dbReference type="GO" id="GO:0005737">
    <property type="term" value="C:cytoplasm"/>
    <property type="evidence" value="ECO:0007669"/>
    <property type="project" value="UniProtKB-SubCell"/>
</dbReference>
<dbReference type="GO" id="GO:0005525">
    <property type="term" value="F:GTP binding"/>
    <property type="evidence" value="ECO:0007669"/>
    <property type="project" value="UniProtKB-UniRule"/>
</dbReference>
<dbReference type="GO" id="GO:0003924">
    <property type="term" value="F:GTPase activity"/>
    <property type="evidence" value="ECO:0007669"/>
    <property type="project" value="UniProtKB-UniRule"/>
</dbReference>
<dbReference type="GO" id="GO:0046872">
    <property type="term" value="F:metal ion binding"/>
    <property type="evidence" value="ECO:0007669"/>
    <property type="project" value="UniProtKB-KW"/>
</dbReference>
<dbReference type="GO" id="GO:0019843">
    <property type="term" value="F:rRNA binding"/>
    <property type="evidence" value="ECO:0007669"/>
    <property type="project" value="UniProtKB-KW"/>
</dbReference>
<dbReference type="GO" id="GO:0042274">
    <property type="term" value="P:ribosomal small subunit biogenesis"/>
    <property type="evidence" value="ECO:0007669"/>
    <property type="project" value="UniProtKB-UniRule"/>
</dbReference>
<dbReference type="CDD" id="cd04466">
    <property type="entry name" value="S1_YloQ_GTPase"/>
    <property type="match status" value="1"/>
</dbReference>
<dbReference type="CDD" id="cd01854">
    <property type="entry name" value="YjeQ_EngC"/>
    <property type="match status" value="1"/>
</dbReference>
<dbReference type="Gene3D" id="2.40.50.140">
    <property type="entry name" value="Nucleic acid-binding proteins"/>
    <property type="match status" value="1"/>
</dbReference>
<dbReference type="Gene3D" id="3.40.50.300">
    <property type="entry name" value="P-loop containing nucleotide triphosphate hydrolases"/>
    <property type="match status" value="1"/>
</dbReference>
<dbReference type="Gene3D" id="1.10.40.50">
    <property type="entry name" value="Probable gtpase engc, domain 3"/>
    <property type="match status" value="1"/>
</dbReference>
<dbReference type="HAMAP" id="MF_01820">
    <property type="entry name" value="GTPase_RsgA"/>
    <property type="match status" value="1"/>
</dbReference>
<dbReference type="InterPro" id="IPR030378">
    <property type="entry name" value="G_CP_dom"/>
</dbReference>
<dbReference type="InterPro" id="IPR012340">
    <property type="entry name" value="NA-bd_OB-fold"/>
</dbReference>
<dbReference type="InterPro" id="IPR027417">
    <property type="entry name" value="P-loop_NTPase"/>
</dbReference>
<dbReference type="InterPro" id="IPR004881">
    <property type="entry name" value="Ribosome_biogen_GTPase_RsgA"/>
</dbReference>
<dbReference type="InterPro" id="IPR010914">
    <property type="entry name" value="RsgA_GTPase_dom"/>
</dbReference>
<dbReference type="InterPro" id="IPR031944">
    <property type="entry name" value="RsgA_N"/>
</dbReference>
<dbReference type="NCBIfam" id="TIGR00157">
    <property type="entry name" value="ribosome small subunit-dependent GTPase A"/>
    <property type="match status" value="1"/>
</dbReference>
<dbReference type="PANTHER" id="PTHR32120">
    <property type="entry name" value="SMALL RIBOSOMAL SUBUNIT BIOGENESIS GTPASE RSGA"/>
    <property type="match status" value="1"/>
</dbReference>
<dbReference type="PANTHER" id="PTHR32120:SF11">
    <property type="entry name" value="SMALL RIBOSOMAL SUBUNIT BIOGENESIS GTPASE RSGA 1, MITOCHONDRIAL-RELATED"/>
    <property type="match status" value="1"/>
</dbReference>
<dbReference type="Pfam" id="PF03193">
    <property type="entry name" value="RsgA_GTPase"/>
    <property type="match status" value="1"/>
</dbReference>
<dbReference type="Pfam" id="PF16745">
    <property type="entry name" value="RsgA_N"/>
    <property type="match status" value="1"/>
</dbReference>
<dbReference type="SUPFAM" id="SSF50249">
    <property type="entry name" value="Nucleic acid-binding proteins"/>
    <property type="match status" value="1"/>
</dbReference>
<dbReference type="SUPFAM" id="SSF52540">
    <property type="entry name" value="P-loop containing nucleoside triphosphate hydrolases"/>
    <property type="match status" value="1"/>
</dbReference>
<dbReference type="PROSITE" id="PS50936">
    <property type="entry name" value="ENGC_GTPASE"/>
    <property type="match status" value="1"/>
</dbReference>
<dbReference type="PROSITE" id="PS51721">
    <property type="entry name" value="G_CP"/>
    <property type="match status" value="1"/>
</dbReference>
<evidence type="ECO:0000255" key="1">
    <source>
        <dbReference type="HAMAP-Rule" id="MF_01820"/>
    </source>
</evidence>
<evidence type="ECO:0000255" key="2">
    <source>
        <dbReference type="PROSITE-ProRule" id="PRU01058"/>
    </source>
</evidence>
<organism>
    <name type="scientific">Staphylococcus aureus (strain MSSA476)</name>
    <dbReference type="NCBI Taxonomy" id="282459"/>
    <lineage>
        <taxon>Bacteria</taxon>
        <taxon>Bacillati</taxon>
        <taxon>Bacillota</taxon>
        <taxon>Bacilli</taxon>
        <taxon>Bacillales</taxon>
        <taxon>Staphylococcaceae</taxon>
        <taxon>Staphylococcus</taxon>
    </lineage>
</organism>
<accession>Q6G9Z2</accession>
<comment type="function">
    <text evidence="1">One of several proteins that assist in the late maturation steps of the functional core of the 30S ribosomal subunit. Helps release RbfA from mature subunits. May play a role in the assembly of ribosomal proteins into the subunit. Circularly permuted GTPase that catalyzes slow GTP hydrolysis, GTPase activity is stimulated by the 30S ribosomal subunit.</text>
</comment>
<comment type="cofactor">
    <cofactor evidence="1">
        <name>Zn(2+)</name>
        <dbReference type="ChEBI" id="CHEBI:29105"/>
    </cofactor>
    <text evidence="1">Binds 1 zinc ion per subunit.</text>
</comment>
<comment type="subunit">
    <text evidence="1">Monomer. Associates with 30S ribosomal subunit, binds 16S rRNA.</text>
</comment>
<comment type="subcellular location">
    <subcellularLocation>
        <location evidence="1">Cytoplasm</location>
    </subcellularLocation>
</comment>
<comment type="similarity">
    <text evidence="1">Belongs to the TRAFAC class YlqF/YawG GTPase family. RsgA subfamily.</text>
</comment>
<keyword id="KW-0963">Cytoplasm</keyword>
<keyword id="KW-0342">GTP-binding</keyword>
<keyword id="KW-0378">Hydrolase</keyword>
<keyword id="KW-0479">Metal-binding</keyword>
<keyword id="KW-0547">Nucleotide-binding</keyword>
<keyword id="KW-0690">Ribosome biogenesis</keyword>
<keyword id="KW-0694">RNA-binding</keyword>
<keyword id="KW-0699">rRNA-binding</keyword>
<keyword id="KW-0862">Zinc</keyword>
<name>RSGA_STAAS</name>
<reference key="1">
    <citation type="journal article" date="2004" name="Proc. Natl. Acad. Sci. U.S.A.">
        <title>Complete genomes of two clinical Staphylococcus aureus strains: evidence for the rapid evolution of virulence and drug resistance.</title>
        <authorList>
            <person name="Holden M.T.G."/>
            <person name="Feil E.J."/>
            <person name="Lindsay J.A."/>
            <person name="Peacock S.J."/>
            <person name="Day N.P.J."/>
            <person name="Enright M.C."/>
            <person name="Foster T.J."/>
            <person name="Moore C.E."/>
            <person name="Hurst L."/>
            <person name="Atkin R."/>
            <person name="Barron A."/>
            <person name="Bason N."/>
            <person name="Bentley S.D."/>
            <person name="Chillingworth C."/>
            <person name="Chillingworth T."/>
            <person name="Churcher C."/>
            <person name="Clark L."/>
            <person name="Corton C."/>
            <person name="Cronin A."/>
            <person name="Doggett J."/>
            <person name="Dowd L."/>
            <person name="Feltwell T."/>
            <person name="Hance Z."/>
            <person name="Harris B."/>
            <person name="Hauser H."/>
            <person name="Holroyd S."/>
            <person name="Jagels K."/>
            <person name="James K.D."/>
            <person name="Lennard N."/>
            <person name="Line A."/>
            <person name="Mayes R."/>
            <person name="Moule S."/>
            <person name="Mungall K."/>
            <person name="Ormond D."/>
            <person name="Quail M.A."/>
            <person name="Rabbinowitsch E."/>
            <person name="Rutherford K.M."/>
            <person name="Sanders M."/>
            <person name="Sharp S."/>
            <person name="Simmonds M."/>
            <person name="Stevens K."/>
            <person name="Whitehead S."/>
            <person name="Barrell B.G."/>
            <person name="Spratt B.G."/>
            <person name="Parkhill J."/>
        </authorList>
    </citation>
    <scope>NUCLEOTIDE SEQUENCE [LARGE SCALE GENOMIC DNA]</scope>
    <source>
        <strain>MSSA476</strain>
    </source>
</reference>